<feature type="chain" id="PRO_0000356776" description="Large ribosomal subunit protein bL33">
    <location>
        <begin position="1"/>
        <end position="54"/>
    </location>
</feature>
<keyword id="KW-0687">Ribonucleoprotein</keyword>
<keyword id="KW-0689">Ribosomal protein</keyword>
<evidence type="ECO:0000255" key="1">
    <source>
        <dbReference type="HAMAP-Rule" id="MF_00294"/>
    </source>
</evidence>
<evidence type="ECO:0000305" key="2"/>
<comment type="similarity">
    <text evidence="1">Belongs to the bacterial ribosomal protein bL33 family.</text>
</comment>
<sequence>MAGKRDKIRLISSADTGHFYTTDKNKKNTPGKLEFKKYDPRVRRHVIYKEGKIK</sequence>
<reference key="1">
    <citation type="journal article" date="2010" name="J. Bacteriol.">
        <title>Whole genome sequences of two Xylella fastidiosa strains (M12 and M23) causing almond leaf scorch disease in California.</title>
        <authorList>
            <person name="Chen J."/>
            <person name="Xie G."/>
            <person name="Han S."/>
            <person name="Chertkov O."/>
            <person name="Sims D."/>
            <person name="Civerolo E.L."/>
        </authorList>
    </citation>
    <scope>NUCLEOTIDE SEQUENCE [LARGE SCALE GENOMIC DNA]</scope>
    <source>
        <strain>M12</strain>
    </source>
</reference>
<accession>B0U5P8</accession>
<proteinExistence type="inferred from homology"/>
<dbReference type="EMBL" id="CP000941">
    <property type="protein sequence ID" value="ACA11552.1"/>
    <property type="molecule type" value="Genomic_DNA"/>
</dbReference>
<dbReference type="RefSeq" id="WP_004086566.1">
    <property type="nucleotide sequence ID" value="NC_010513.1"/>
</dbReference>
<dbReference type="SMR" id="B0U5P8"/>
<dbReference type="GeneID" id="93904191"/>
<dbReference type="KEGG" id="xfm:Xfasm12_0547"/>
<dbReference type="HOGENOM" id="CLU_190949_1_1_6"/>
<dbReference type="GO" id="GO:0022625">
    <property type="term" value="C:cytosolic large ribosomal subunit"/>
    <property type="evidence" value="ECO:0007669"/>
    <property type="project" value="TreeGrafter"/>
</dbReference>
<dbReference type="GO" id="GO:0003735">
    <property type="term" value="F:structural constituent of ribosome"/>
    <property type="evidence" value="ECO:0007669"/>
    <property type="project" value="InterPro"/>
</dbReference>
<dbReference type="GO" id="GO:0006412">
    <property type="term" value="P:translation"/>
    <property type="evidence" value="ECO:0007669"/>
    <property type="project" value="UniProtKB-UniRule"/>
</dbReference>
<dbReference type="FunFam" id="2.20.28.120:FF:000001">
    <property type="entry name" value="50S ribosomal protein L33"/>
    <property type="match status" value="1"/>
</dbReference>
<dbReference type="Gene3D" id="2.20.28.120">
    <property type="entry name" value="Ribosomal protein L33"/>
    <property type="match status" value="1"/>
</dbReference>
<dbReference type="HAMAP" id="MF_00294">
    <property type="entry name" value="Ribosomal_bL33"/>
    <property type="match status" value="1"/>
</dbReference>
<dbReference type="InterPro" id="IPR001705">
    <property type="entry name" value="Ribosomal_bL33"/>
</dbReference>
<dbReference type="InterPro" id="IPR018264">
    <property type="entry name" value="Ribosomal_bL33_CS"/>
</dbReference>
<dbReference type="InterPro" id="IPR038584">
    <property type="entry name" value="Ribosomal_bL33_sf"/>
</dbReference>
<dbReference type="InterPro" id="IPR011332">
    <property type="entry name" value="Ribosomal_zn-bd"/>
</dbReference>
<dbReference type="NCBIfam" id="NF001860">
    <property type="entry name" value="PRK00595.1"/>
    <property type="match status" value="1"/>
</dbReference>
<dbReference type="NCBIfam" id="TIGR01023">
    <property type="entry name" value="rpmG_bact"/>
    <property type="match status" value="1"/>
</dbReference>
<dbReference type="PANTHER" id="PTHR15238">
    <property type="entry name" value="54S RIBOSOMAL PROTEIN L39, MITOCHONDRIAL"/>
    <property type="match status" value="1"/>
</dbReference>
<dbReference type="PANTHER" id="PTHR15238:SF1">
    <property type="entry name" value="LARGE RIBOSOMAL SUBUNIT PROTEIN BL33M"/>
    <property type="match status" value="1"/>
</dbReference>
<dbReference type="Pfam" id="PF00471">
    <property type="entry name" value="Ribosomal_L33"/>
    <property type="match status" value="1"/>
</dbReference>
<dbReference type="SUPFAM" id="SSF57829">
    <property type="entry name" value="Zn-binding ribosomal proteins"/>
    <property type="match status" value="1"/>
</dbReference>
<dbReference type="PROSITE" id="PS00582">
    <property type="entry name" value="RIBOSOMAL_L33"/>
    <property type="match status" value="1"/>
</dbReference>
<organism>
    <name type="scientific">Xylella fastidiosa (strain M12)</name>
    <dbReference type="NCBI Taxonomy" id="405440"/>
    <lineage>
        <taxon>Bacteria</taxon>
        <taxon>Pseudomonadati</taxon>
        <taxon>Pseudomonadota</taxon>
        <taxon>Gammaproteobacteria</taxon>
        <taxon>Lysobacterales</taxon>
        <taxon>Lysobacteraceae</taxon>
        <taxon>Xylella</taxon>
    </lineage>
</organism>
<gene>
    <name evidence="1" type="primary">rpmG</name>
    <name type="ordered locus">Xfasm12_0547</name>
</gene>
<name>RL33_XYLFM</name>
<protein>
    <recommendedName>
        <fullName evidence="1">Large ribosomal subunit protein bL33</fullName>
    </recommendedName>
    <alternativeName>
        <fullName evidence="2">50S ribosomal protein L33</fullName>
    </alternativeName>
</protein>